<gene>
    <name evidence="1" type="primary">rplI</name>
    <name evidence="1" type="synonym">rpl9</name>
    <name type="ordered locus">all0579</name>
</gene>
<comment type="function">
    <text evidence="1">Binds to the 23S rRNA.</text>
</comment>
<comment type="similarity">
    <text evidence="1">Belongs to the bacterial ribosomal protein bL9 family.</text>
</comment>
<accession>Q8YZA0</accession>
<dbReference type="EMBL" id="BA000019">
    <property type="protein sequence ID" value="BAB72537.1"/>
    <property type="molecule type" value="Genomic_DNA"/>
</dbReference>
<dbReference type="PIR" id="AB1879">
    <property type="entry name" value="AB1879"/>
</dbReference>
<dbReference type="RefSeq" id="WP_010994755.1">
    <property type="nucleotide sequence ID" value="NZ_RSCN01000009.1"/>
</dbReference>
<dbReference type="SMR" id="Q8YZA0"/>
<dbReference type="STRING" id="103690.gene:10492590"/>
<dbReference type="KEGG" id="ana:all0579"/>
<dbReference type="eggNOG" id="COG0359">
    <property type="taxonomic scope" value="Bacteria"/>
</dbReference>
<dbReference type="OrthoDB" id="9788336at2"/>
<dbReference type="Proteomes" id="UP000002483">
    <property type="component" value="Chromosome"/>
</dbReference>
<dbReference type="GO" id="GO:1990904">
    <property type="term" value="C:ribonucleoprotein complex"/>
    <property type="evidence" value="ECO:0007669"/>
    <property type="project" value="UniProtKB-KW"/>
</dbReference>
<dbReference type="GO" id="GO:0005840">
    <property type="term" value="C:ribosome"/>
    <property type="evidence" value="ECO:0007669"/>
    <property type="project" value="UniProtKB-KW"/>
</dbReference>
<dbReference type="GO" id="GO:0019843">
    <property type="term" value="F:rRNA binding"/>
    <property type="evidence" value="ECO:0007669"/>
    <property type="project" value="UniProtKB-UniRule"/>
</dbReference>
<dbReference type="GO" id="GO:0003735">
    <property type="term" value="F:structural constituent of ribosome"/>
    <property type="evidence" value="ECO:0007669"/>
    <property type="project" value="InterPro"/>
</dbReference>
<dbReference type="GO" id="GO:0006412">
    <property type="term" value="P:translation"/>
    <property type="evidence" value="ECO:0007669"/>
    <property type="project" value="UniProtKB-UniRule"/>
</dbReference>
<dbReference type="FunFam" id="3.40.5.10:FF:000003">
    <property type="entry name" value="50S ribosomal protein L9"/>
    <property type="match status" value="1"/>
</dbReference>
<dbReference type="Gene3D" id="3.10.430.100">
    <property type="entry name" value="Ribosomal protein L9, C-terminal domain"/>
    <property type="match status" value="1"/>
</dbReference>
<dbReference type="Gene3D" id="3.40.5.10">
    <property type="entry name" value="Ribosomal protein L9, N-terminal domain"/>
    <property type="match status" value="1"/>
</dbReference>
<dbReference type="HAMAP" id="MF_00503">
    <property type="entry name" value="Ribosomal_bL9"/>
    <property type="match status" value="1"/>
</dbReference>
<dbReference type="InterPro" id="IPR000244">
    <property type="entry name" value="Ribosomal_bL9"/>
</dbReference>
<dbReference type="InterPro" id="IPR009027">
    <property type="entry name" value="Ribosomal_bL9/RNase_H1_N"/>
</dbReference>
<dbReference type="InterPro" id="IPR020594">
    <property type="entry name" value="Ribosomal_bL9_bac/chp"/>
</dbReference>
<dbReference type="InterPro" id="IPR020069">
    <property type="entry name" value="Ribosomal_bL9_C"/>
</dbReference>
<dbReference type="InterPro" id="IPR036791">
    <property type="entry name" value="Ribosomal_bL9_C_sf"/>
</dbReference>
<dbReference type="InterPro" id="IPR020070">
    <property type="entry name" value="Ribosomal_bL9_N"/>
</dbReference>
<dbReference type="InterPro" id="IPR036935">
    <property type="entry name" value="Ribosomal_bL9_N_sf"/>
</dbReference>
<dbReference type="NCBIfam" id="TIGR00158">
    <property type="entry name" value="L9"/>
    <property type="match status" value="1"/>
</dbReference>
<dbReference type="PANTHER" id="PTHR21368">
    <property type="entry name" value="50S RIBOSOMAL PROTEIN L9"/>
    <property type="match status" value="1"/>
</dbReference>
<dbReference type="Pfam" id="PF03948">
    <property type="entry name" value="Ribosomal_L9_C"/>
    <property type="match status" value="1"/>
</dbReference>
<dbReference type="Pfam" id="PF01281">
    <property type="entry name" value="Ribosomal_L9_N"/>
    <property type="match status" value="1"/>
</dbReference>
<dbReference type="SUPFAM" id="SSF55658">
    <property type="entry name" value="L9 N-domain-like"/>
    <property type="match status" value="1"/>
</dbReference>
<dbReference type="SUPFAM" id="SSF55653">
    <property type="entry name" value="Ribosomal protein L9 C-domain"/>
    <property type="match status" value="1"/>
</dbReference>
<dbReference type="PROSITE" id="PS00651">
    <property type="entry name" value="RIBOSOMAL_L9"/>
    <property type="match status" value="1"/>
</dbReference>
<feature type="chain" id="PRO_0000176614" description="Large ribosomal subunit protein bL9">
    <location>
        <begin position="1"/>
        <end position="152"/>
    </location>
</feature>
<evidence type="ECO:0000255" key="1">
    <source>
        <dbReference type="HAMAP-Rule" id="MF_00503"/>
    </source>
</evidence>
<evidence type="ECO:0000305" key="2"/>
<organism>
    <name type="scientific">Nostoc sp. (strain PCC 7120 / SAG 25.82 / UTEX 2576)</name>
    <dbReference type="NCBI Taxonomy" id="103690"/>
    <lineage>
        <taxon>Bacteria</taxon>
        <taxon>Bacillati</taxon>
        <taxon>Cyanobacteriota</taxon>
        <taxon>Cyanophyceae</taxon>
        <taxon>Nostocales</taxon>
        <taxon>Nostocaceae</taxon>
        <taxon>Nostoc</taxon>
    </lineage>
</organism>
<proteinExistence type="inferred from homology"/>
<sequence length="152" mass="16769">MVKRVQLVLTKDVSKLGRSGDLVDVAPGYARNYLIPQSLATHATPGILKQVERRREQERQRQLELRQQALEQKESLEKVGSLKIAKQVGENEAIFGTVTSQDVADAIQAATSQEVDRRGITIPDIGKLGTYKAEIKLFSDVTAQIDIEVVAS</sequence>
<reference key="1">
    <citation type="journal article" date="2001" name="DNA Res.">
        <title>Complete genomic sequence of the filamentous nitrogen-fixing cyanobacterium Anabaena sp. strain PCC 7120.</title>
        <authorList>
            <person name="Kaneko T."/>
            <person name="Nakamura Y."/>
            <person name="Wolk C.P."/>
            <person name="Kuritz T."/>
            <person name="Sasamoto S."/>
            <person name="Watanabe A."/>
            <person name="Iriguchi M."/>
            <person name="Ishikawa A."/>
            <person name="Kawashima K."/>
            <person name="Kimura T."/>
            <person name="Kishida Y."/>
            <person name="Kohara M."/>
            <person name="Matsumoto M."/>
            <person name="Matsuno A."/>
            <person name="Muraki A."/>
            <person name="Nakazaki N."/>
            <person name="Shimpo S."/>
            <person name="Sugimoto M."/>
            <person name="Takazawa M."/>
            <person name="Yamada M."/>
            <person name="Yasuda M."/>
            <person name="Tabata S."/>
        </authorList>
    </citation>
    <scope>NUCLEOTIDE SEQUENCE [LARGE SCALE GENOMIC DNA]</scope>
    <source>
        <strain>PCC 7120 / SAG 25.82 / UTEX 2576</strain>
    </source>
</reference>
<keyword id="KW-1185">Reference proteome</keyword>
<keyword id="KW-0687">Ribonucleoprotein</keyword>
<keyword id="KW-0689">Ribosomal protein</keyword>
<keyword id="KW-0694">RNA-binding</keyword>
<keyword id="KW-0699">rRNA-binding</keyword>
<name>RL9_NOSS1</name>
<protein>
    <recommendedName>
        <fullName evidence="1">Large ribosomal subunit protein bL9</fullName>
    </recommendedName>
    <alternativeName>
        <fullName evidence="2">50S ribosomal protein L9</fullName>
    </alternativeName>
</protein>